<dbReference type="EMBL" id="AC005278">
    <property type="protein sequence ID" value="AAC72127.1"/>
    <property type="status" value="ALT_SEQ"/>
    <property type="molecule type" value="Genomic_DNA"/>
</dbReference>
<dbReference type="EMBL" id="CP002684">
    <property type="protein sequence ID" value="AEE27552.1"/>
    <property type="molecule type" value="Genomic_DNA"/>
</dbReference>
<dbReference type="PIR" id="B86164">
    <property type="entry name" value="B86164"/>
</dbReference>
<dbReference type="RefSeq" id="NP_171826.2">
    <property type="nucleotide sequence ID" value="NM_100209.3"/>
</dbReference>
<dbReference type="SMR" id="Q9ZVS8"/>
<dbReference type="FunCoup" id="Q9ZVS8">
    <property type="interactions" value="879"/>
</dbReference>
<dbReference type="STRING" id="3702.Q9ZVS8"/>
<dbReference type="GlyCosmos" id="Q9ZVS8">
    <property type="glycosylation" value="4 sites, No reported glycans"/>
</dbReference>
<dbReference type="GlyGen" id="Q9ZVS8">
    <property type="glycosylation" value="4 sites"/>
</dbReference>
<dbReference type="PaxDb" id="3702-AT1G03270.1"/>
<dbReference type="ProteomicsDB" id="242505"/>
<dbReference type="EnsemblPlants" id="AT1G03270.1">
    <property type="protein sequence ID" value="AT1G03270.1"/>
    <property type="gene ID" value="AT1G03270"/>
</dbReference>
<dbReference type="GeneID" id="838595"/>
<dbReference type="Gramene" id="AT1G03270.1">
    <property type="protein sequence ID" value="AT1G03270.1"/>
    <property type="gene ID" value="AT1G03270"/>
</dbReference>
<dbReference type="KEGG" id="ath:AT1G03270"/>
<dbReference type="Araport" id="AT1G03270"/>
<dbReference type="TAIR" id="AT1G03270"/>
<dbReference type="eggNOG" id="KOG2118">
    <property type="taxonomic scope" value="Eukaryota"/>
</dbReference>
<dbReference type="HOGENOM" id="CLU_011310_0_0_1"/>
<dbReference type="InParanoid" id="Q9ZVS8"/>
<dbReference type="OMA" id="PTHVKNR"/>
<dbReference type="OrthoDB" id="5353557at2759"/>
<dbReference type="PRO" id="PR:Q9ZVS8"/>
<dbReference type="Proteomes" id="UP000006548">
    <property type="component" value="Chromosome 1"/>
</dbReference>
<dbReference type="ExpressionAtlas" id="Q9ZVS8">
    <property type="expression patterns" value="baseline and differential"/>
</dbReference>
<dbReference type="GO" id="GO:0016020">
    <property type="term" value="C:membrane"/>
    <property type="evidence" value="ECO:0007669"/>
    <property type="project" value="UniProtKB-SubCell"/>
</dbReference>
<dbReference type="GO" id="GO:0010960">
    <property type="term" value="P:magnesium ion homeostasis"/>
    <property type="evidence" value="ECO:0007669"/>
    <property type="project" value="InterPro"/>
</dbReference>
<dbReference type="CDD" id="cd04590">
    <property type="entry name" value="CBS_pair_CorC_HlyC_assoc"/>
    <property type="match status" value="1"/>
</dbReference>
<dbReference type="FunFam" id="3.10.580.10:FF:000021">
    <property type="entry name" value="DUF21 domain-containing protein At4g14240-like"/>
    <property type="match status" value="1"/>
</dbReference>
<dbReference type="FunFam" id="3.10.580.10:FF:000057">
    <property type="entry name" value="DUF21 domain-containing protein At5g52790"/>
    <property type="match status" value="1"/>
</dbReference>
<dbReference type="Gene3D" id="3.10.580.10">
    <property type="entry name" value="CBS-domain"/>
    <property type="match status" value="2"/>
</dbReference>
<dbReference type="InterPro" id="IPR045095">
    <property type="entry name" value="ACDP"/>
</dbReference>
<dbReference type="InterPro" id="IPR046342">
    <property type="entry name" value="CBS_dom_sf"/>
</dbReference>
<dbReference type="InterPro" id="IPR002550">
    <property type="entry name" value="CNNM"/>
</dbReference>
<dbReference type="InterPro" id="IPR044751">
    <property type="entry name" value="Ion_transp-like_CBS"/>
</dbReference>
<dbReference type="PANTHER" id="PTHR12064">
    <property type="entry name" value="METAL TRANSPORTER CNNM"/>
    <property type="match status" value="1"/>
</dbReference>
<dbReference type="PANTHER" id="PTHR12064:SF97">
    <property type="entry name" value="METAL TRANSPORTER CNNM-5"/>
    <property type="match status" value="1"/>
</dbReference>
<dbReference type="Pfam" id="PF01595">
    <property type="entry name" value="CNNM"/>
    <property type="match status" value="1"/>
</dbReference>
<dbReference type="SUPFAM" id="SSF54631">
    <property type="entry name" value="CBS-domain pair"/>
    <property type="match status" value="1"/>
</dbReference>
<dbReference type="PROSITE" id="PS51846">
    <property type="entry name" value="CNNM"/>
    <property type="match status" value="1"/>
</dbReference>
<feature type="chain" id="PRO_0000411681" description="Putative DUF21 domain-containing protein At1g03270">
    <location>
        <begin position="1"/>
        <end position="499"/>
    </location>
</feature>
<feature type="topological domain" description="Extracellular" evidence="1">
    <location>
        <begin position="1"/>
        <end position="32"/>
    </location>
</feature>
<feature type="transmembrane region" description="Helical" evidence="1">
    <location>
        <begin position="33"/>
        <end position="53"/>
    </location>
</feature>
<feature type="topological domain" description="Cytoplasmic" evidence="1">
    <location>
        <begin position="54"/>
        <end position="91"/>
    </location>
</feature>
<feature type="transmembrane region" description="Helical" evidence="1">
    <location>
        <begin position="92"/>
        <end position="112"/>
    </location>
</feature>
<feature type="topological domain" description="Extracellular" evidence="1">
    <location>
        <begin position="113"/>
        <end position="114"/>
    </location>
</feature>
<feature type="transmembrane region" description="Helical" evidence="1">
    <location>
        <begin position="115"/>
        <end position="135"/>
    </location>
</feature>
<feature type="topological domain" description="Cytoplasmic" evidence="1">
    <location>
        <begin position="136"/>
        <end position="145"/>
    </location>
</feature>
<feature type="transmembrane region" description="Helical" evidence="1">
    <location>
        <begin position="146"/>
        <end position="166"/>
    </location>
</feature>
<feature type="topological domain" description="Extracellular" evidence="1">
    <location>
        <begin position="167"/>
        <end position="499"/>
    </location>
</feature>
<feature type="domain" description="CNNM transmembrane" evidence="2">
    <location>
        <begin position="29"/>
        <end position="211"/>
    </location>
</feature>
<feature type="domain" description="CBS 1">
    <location>
        <begin position="230"/>
        <end position="291"/>
    </location>
</feature>
<feature type="domain" description="CBS 2">
    <location>
        <begin position="295"/>
        <end position="359"/>
    </location>
</feature>
<feature type="domain" description="CBS 3">
    <location>
        <begin position="365"/>
        <end position="431"/>
    </location>
</feature>
<feature type="glycosylation site" description="N-linked (GlcNAc...) asparagine" evidence="1">
    <location>
        <position position="181"/>
    </location>
</feature>
<feature type="glycosylation site" description="N-linked (GlcNAc...) asparagine" evidence="1">
    <location>
        <position position="357"/>
    </location>
</feature>
<feature type="glycosylation site" description="N-linked (GlcNAc...) asparagine" evidence="1">
    <location>
        <position position="391"/>
    </location>
</feature>
<feature type="glycosylation site" description="N-linked (GlcNAc...) asparagine" evidence="1">
    <location>
        <position position="484"/>
    </location>
</feature>
<sequence length="499" mass="54662">MVVLSTLALVRAAYSLNSFVFEAEDIRFGSPWWFVVVGVACFLVLFAGIMSGLTLGLMSLGLVELEILQQSGSSAEKKQAAAILPVVKKQHQLLVTLLLCNAAAMEALPICLDKIFHPFVAVLLSVTFVLAFGEIIPQAICSRYGLAVGANFLWLVRILMIICYPIAYPIGKVLDAVIGHNDTLFRRAQLKALVSIHSQEAGKGGELTHEETMIISGALDLSQKTAEEAMTPIESTFSLDVNTKLDWETIGKILSRGHSRIPVYLGNPKNIIGLLLVKSLLTVRAETEAPVSSVSIRKIPRVPSDMPLYDILNEFQKGSSHMAAVVKVKDKDKKNNMQLLSNGETPKENMKFYQSSNLTAPLLKHESHDVVVDIDKVPKHVKNRGRNFQQNGTVTRDLPCLLEDNEDAEVIGIITLEDVFEELLQAEIVDETDVYIDVHKRVRVAAAAAAAVSSITRASPAEIQSKVGQTVKKLVGKEARGTKNYTTKITEPLLAESDR</sequence>
<protein>
    <recommendedName>
        <fullName>Putative DUF21 domain-containing protein At1g03270</fullName>
    </recommendedName>
    <alternativeName>
        <fullName>CBS domain-containing protein CBSDUF4</fullName>
    </alternativeName>
</protein>
<organism>
    <name type="scientific">Arabidopsis thaliana</name>
    <name type="common">Mouse-ear cress</name>
    <dbReference type="NCBI Taxonomy" id="3702"/>
    <lineage>
        <taxon>Eukaryota</taxon>
        <taxon>Viridiplantae</taxon>
        <taxon>Streptophyta</taxon>
        <taxon>Embryophyta</taxon>
        <taxon>Tracheophyta</taxon>
        <taxon>Spermatophyta</taxon>
        <taxon>Magnoliopsida</taxon>
        <taxon>eudicotyledons</taxon>
        <taxon>Gunneridae</taxon>
        <taxon>Pentapetalae</taxon>
        <taxon>rosids</taxon>
        <taxon>malvids</taxon>
        <taxon>Brassicales</taxon>
        <taxon>Brassicaceae</taxon>
        <taxon>Camelineae</taxon>
        <taxon>Arabidopsis</taxon>
    </lineage>
</organism>
<comment type="subcellular location">
    <subcellularLocation>
        <location evidence="3">Membrane</location>
        <topology evidence="3">Multi-pass membrane protein</topology>
    </subcellularLocation>
</comment>
<comment type="sequence caution" evidence="3">
    <conflict type="erroneous gene model prediction">
        <sequence resource="EMBL-CDS" id="AAC72127"/>
    </conflict>
</comment>
<keyword id="KW-0129">CBS domain</keyword>
<keyword id="KW-0325">Glycoprotein</keyword>
<keyword id="KW-0472">Membrane</keyword>
<keyword id="KW-1185">Reference proteome</keyword>
<keyword id="KW-0677">Repeat</keyword>
<keyword id="KW-0812">Transmembrane</keyword>
<keyword id="KW-1133">Transmembrane helix</keyword>
<reference key="1">
    <citation type="journal article" date="2000" name="Nature">
        <title>Sequence and analysis of chromosome 1 of the plant Arabidopsis thaliana.</title>
        <authorList>
            <person name="Theologis A."/>
            <person name="Ecker J.R."/>
            <person name="Palm C.J."/>
            <person name="Federspiel N.A."/>
            <person name="Kaul S."/>
            <person name="White O."/>
            <person name="Alonso J."/>
            <person name="Altafi H."/>
            <person name="Araujo R."/>
            <person name="Bowman C.L."/>
            <person name="Brooks S.Y."/>
            <person name="Buehler E."/>
            <person name="Chan A."/>
            <person name="Chao Q."/>
            <person name="Chen H."/>
            <person name="Cheuk R.F."/>
            <person name="Chin C.W."/>
            <person name="Chung M.K."/>
            <person name="Conn L."/>
            <person name="Conway A.B."/>
            <person name="Conway A.R."/>
            <person name="Creasy T.H."/>
            <person name="Dewar K."/>
            <person name="Dunn P."/>
            <person name="Etgu P."/>
            <person name="Feldblyum T.V."/>
            <person name="Feng J.-D."/>
            <person name="Fong B."/>
            <person name="Fujii C.Y."/>
            <person name="Gill J.E."/>
            <person name="Goldsmith A.D."/>
            <person name="Haas B."/>
            <person name="Hansen N.F."/>
            <person name="Hughes B."/>
            <person name="Huizar L."/>
            <person name="Hunter J.L."/>
            <person name="Jenkins J."/>
            <person name="Johnson-Hopson C."/>
            <person name="Khan S."/>
            <person name="Khaykin E."/>
            <person name="Kim C.J."/>
            <person name="Koo H.L."/>
            <person name="Kremenetskaia I."/>
            <person name="Kurtz D.B."/>
            <person name="Kwan A."/>
            <person name="Lam B."/>
            <person name="Langin-Hooper S."/>
            <person name="Lee A."/>
            <person name="Lee J.M."/>
            <person name="Lenz C.A."/>
            <person name="Li J.H."/>
            <person name="Li Y.-P."/>
            <person name="Lin X."/>
            <person name="Liu S.X."/>
            <person name="Liu Z.A."/>
            <person name="Luros J.S."/>
            <person name="Maiti R."/>
            <person name="Marziali A."/>
            <person name="Militscher J."/>
            <person name="Miranda M."/>
            <person name="Nguyen M."/>
            <person name="Nierman W.C."/>
            <person name="Osborne B.I."/>
            <person name="Pai G."/>
            <person name="Peterson J."/>
            <person name="Pham P.K."/>
            <person name="Rizzo M."/>
            <person name="Rooney T."/>
            <person name="Rowley D."/>
            <person name="Sakano H."/>
            <person name="Salzberg S.L."/>
            <person name="Schwartz J.R."/>
            <person name="Shinn P."/>
            <person name="Southwick A.M."/>
            <person name="Sun H."/>
            <person name="Tallon L.J."/>
            <person name="Tambunga G."/>
            <person name="Toriumi M.J."/>
            <person name="Town C.D."/>
            <person name="Utterback T."/>
            <person name="Van Aken S."/>
            <person name="Vaysberg M."/>
            <person name="Vysotskaia V.S."/>
            <person name="Walker M."/>
            <person name="Wu D."/>
            <person name="Yu G."/>
            <person name="Fraser C.M."/>
            <person name="Venter J.C."/>
            <person name="Davis R.W."/>
        </authorList>
    </citation>
    <scope>NUCLEOTIDE SEQUENCE [LARGE SCALE GENOMIC DNA]</scope>
    <source>
        <strain>cv. Columbia</strain>
    </source>
</reference>
<reference key="2">
    <citation type="journal article" date="2017" name="Plant J.">
        <title>Araport11: a complete reannotation of the Arabidopsis thaliana reference genome.</title>
        <authorList>
            <person name="Cheng C.Y."/>
            <person name="Krishnakumar V."/>
            <person name="Chan A.P."/>
            <person name="Thibaud-Nissen F."/>
            <person name="Schobel S."/>
            <person name="Town C.D."/>
        </authorList>
    </citation>
    <scope>GENOME REANNOTATION</scope>
    <source>
        <strain>cv. Columbia</strain>
    </source>
</reference>
<reference key="3">
    <citation type="journal article" date="2009" name="BMC Genomics">
        <title>Genome wide expression analysis of CBS domain containing proteins in Arabidopsis thaliana (L.) Heynh and Oryza sativa L. reveals their developmental and stress regulation.</title>
        <authorList>
            <person name="Kushwaha H.R."/>
            <person name="Singh A.K."/>
            <person name="Sopory S.K."/>
            <person name="Singla-Pareek S.L."/>
            <person name="Pareek A."/>
        </authorList>
    </citation>
    <scope>GENE FAMILY</scope>
    <scope>NOMENCLATURE</scope>
</reference>
<gene>
    <name type="primary">CBSDUF4</name>
    <name type="ordered locus">At1g03270</name>
    <name type="ORF">F15K9.13</name>
</gene>
<evidence type="ECO:0000255" key="1"/>
<evidence type="ECO:0000255" key="2">
    <source>
        <dbReference type="PROSITE-ProRule" id="PRU01193"/>
    </source>
</evidence>
<evidence type="ECO:0000305" key="3"/>
<accession>Q9ZVS8</accession>
<accession>F4I0U8</accession>
<proteinExistence type="predicted"/>
<name>Y1327_ARATH</name>